<accession>D3E045</accession>
<organism>
    <name type="scientific">Methanobrevibacter ruminantium (strain ATCC 35063 / DSM 1093 / JCM 13430 / OCM 146 / M1)</name>
    <name type="common">Methanobacterium ruminantium</name>
    <dbReference type="NCBI Taxonomy" id="634498"/>
    <lineage>
        <taxon>Archaea</taxon>
        <taxon>Methanobacteriati</taxon>
        <taxon>Methanobacteriota</taxon>
        <taxon>Methanomada group</taxon>
        <taxon>Methanobacteria</taxon>
        <taxon>Methanobacteriales</taxon>
        <taxon>Methanobacteriaceae</taxon>
        <taxon>Methanobrevibacter</taxon>
    </lineage>
</organism>
<protein>
    <recommendedName>
        <fullName evidence="1">Tetrahydromethanopterin S-methyltransferase subunit A 1</fullName>
        <ecNumber evidence="1">7.2.1.4</ecNumber>
    </recommendedName>
    <alternativeName>
        <fullName evidence="1">N5-methyltetrahydromethanopterin--coenzyme M methyltransferase subunit A 1</fullName>
    </alternativeName>
</protein>
<evidence type="ECO:0000255" key="1">
    <source>
        <dbReference type="HAMAP-Rule" id="MF_01093"/>
    </source>
</evidence>
<proteinExistence type="inferred from homology"/>
<sequence length="245" mass="25998">MADKKPAADNWPVVSGDYIVGDPESPVAVTTLASHNEDIPAAAGAAIAGPCKTENLGIEKVVANIISNPNIRFLILCGAEVQGHITGQSIQALHENGCDPEKKKITGATGAIPFVENIPMEGVERFQQQVELVDLIDNEDGGAITAKVKECIEKDPGAFEEDAMVIEVKEGDDDEDEGEEIRPISAETALLEARIRNIDTQVKLVGAVQRNMAGNYSGKVQGIMIGLIFTLVIGFLLLMAPLLGA</sequence>
<feature type="chain" id="PRO_0000403059" description="Tetrahydromethanopterin S-methyltransferase subunit A 1">
    <location>
        <begin position="1"/>
        <end position="245"/>
    </location>
</feature>
<feature type="topological domain" description="Cytoplasmic" evidence="1">
    <location>
        <begin position="1"/>
        <end position="222"/>
    </location>
</feature>
<feature type="transmembrane region" description="Helical" evidence="1">
    <location>
        <begin position="223"/>
        <end position="243"/>
    </location>
</feature>
<feature type="topological domain" description="Extracellular" evidence="1">
    <location>
        <begin position="244"/>
        <end position="245"/>
    </location>
</feature>
<feature type="binding site" evidence="1">
    <location>
        <position position="84"/>
    </location>
    <ligand>
        <name>5-hydroxybenzimidazolylcob(I)amide</name>
        <dbReference type="ChEBI" id="CHEBI:60494"/>
        <note>cofactor</note>
    </ligand>
</feature>
<comment type="function">
    <text evidence="1">Part of a complex that catalyzes the formation of methyl-coenzyme M and tetrahydromethanopterin from coenzyme M and methyl-tetrahydromethanopterin. This is an energy-conserving, sodium-ion translocating step.</text>
</comment>
<comment type="catalytic activity">
    <reaction evidence="1">
        <text>5-methyl-5,6,7,8-tetrahydromethanopterin + coenzyme M + 2 Na(+)(in) = 5,6,7,8-tetrahydromethanopterin + methyl-coenzyme M + 2 Na(+)(out)</text>
        <dbReference type="Rhea" id="RHEA:53492"/>
        <dbReference type="ChEBI" id="CHEBI:29101"/>
        <dbReference type="ChEBI" id="CHEBI:58103"/>
        <dbReference type="ChEBI" id="CHEBI:58116"/>
        <dbReference type="ChEBI" id="CHEBI:58286"/>
        <dbReference type="ChEBI" id="CHEBI:58319"/>
        <dbReference type="EC" id="7.2.1.4"/>
    </reaction>
</comment>
<comment type="cofactor">
    <cofactor evidence="1">
        <name>5-hydroxybenzimidazolylcob(I)amide</name>
        <dbReference type="ChEBI" id="CHEBI:60494"/>
    </cofactor>
    <text evidence="1">Binds 1 5-hydroxybenzimidazolylcobamide group.</text>
</comment>
<comment type="pathway">
    <text evidence="1">One-carbon metabolism; methanogenesis from CO(2); methyl-coenzyme M from 5,10-methylene-5,6,7,8-tetrahydromethanopterin: step 2/2.</text>
</comment>
<comment type="subunit">
    <text evidence="1">The complex is composed of 8 subunits; MtrA, MtrB, MtrC, MtrD, MtrE, MtrF, MtrG and MtrH.</text>
</comment>
<comment type="subcellular location">
    <subcellularLocation>
        <location evidence="1">Cell membrane</location>
        <topology evidence="1">Single-pass membrane protein</topology>
    </subcellularLocation>
</comment>
<comment type="similarity">
    <text evidence="1">Belongs to the MtrA family.</text>
</comment>
<reference key="1">
    <citation type="journal article" date="2010" name="PLoS ONE">
        <title>The genome sequence of the rumen methanogen Methanobrevibacter ruminantium reveals new possibilities for controlling ruminant methane emissions.</title>
        <authorList>
            <person name="Leahy S.C."/>
            <person name="Kelly W.J."/>
            <person name="Altermann E."/>
            <person name="Ronimus R.S."/>
            <person name="Yeoman C.J."/>
            <person name="Pacheco D.M."/>
            <person name="Li D."/>
            <person name="Kong Z."/>
            <person name="McTavish S."/>
            <person name="Sang C."/>
            <person name="Lambie S.C."/>
            <person name="Janssen P.H."/>
            <person name="Dey D."/>
            <person name="Attwood G.T."/>
        </authorList>
    </citation>
    <scope>NUCLEOTIDE SEQUENCE [LARGE SCALE GENOMIC DNA]</scope>
    <source>
        <strain>ATCC 35063 / DSM 1093 / JCM 13430 / OCM 146 / M1</strain>
    </source>
</reference>
<name>MTRA1_METRM</name>
<dbReference type="EC" id="7.2.1.4" evidence="1"/>
<dbReference type="EMBL" id="CP001719">
    <property type="protein sequence ID" value="ADC47769.1"/>
    <property type="molecule type" value="Genomic_DNA"/>
</dbReference>
<dbReference type="RefSeq" id="WP_012956717.1">
    <property type="nucleotide sequence ID" value="NC_013790.1"/>
</dbReference>
<dbReference type="SMR" id="D3E045"/>
<dbReference type="STRING" id="634498.mru_1919"/>
<dbReference type="GeneID" id="8771589"/>
<dbReference type="KEGG" id="mru:mru_1919"/>
<dbReference type="PATRIC" id="fig|634498.28.peg.1919"/>
<dbReference type="eggNOG" id="arCOG03221">
    <property type="taxonomic scope" value="Archaea"/>
</dbReference>
<dbReference type="HOGENOM" id="CLU_100863_0_0_2"/>
<dbReference type="OrthoDB" id="130682at2157"/>
<dbReference type="UniPathway" id="UPA00640">
    <property type="reaction ID" value="UER00698"/>
</dbReference>
<dbReference type="Proteomes" id="UP000008680">
    <property type="component" value="Chromosome"/>
</dbReference>
<dbReference type="GO" id="GO:0005886">
    <property type="term" value="C:plasma membrane"/>
    <property type="evidence" value="ECO:0007669"/>
    <property type="project" value="UniProtKB-SubCell"/>
</dbReference>
<dbReference type="GO" id="GO:0050897">
    <property type="term" value="F:cobalt ion binding"/>
    <property type="evidence" value="ECO:0007669"/>
    <property type="project" value="InterPro"/>
</dbReference>
<dbReference type="GO" id="GO:0030269">
    <property type="term" value="F:tetrahydromethanopterin S-methyltransferase activity"/>
    <property type="evidence" value="ECO:0007669"/>
    <property type="project" value="UniProtKB-UniRule"/>
</dbReference>
<dbReference type="GO" id="GO:0019386">
    <property type="term" value="P:methanogenesis, from carbon dioxide"/>
    <property type="evidence" value="ECO:0007669"/>
    <property type="project" value="UniProtKB-UniRule"/>
</dbReference>
<dbReference type="GO" id="GO:0032259">
    <property type="term" value="P:methylation"/>
    <property type="evidence" value="ECO:0007669"/>
    <property type="project" value="UniProtKB-KW"/>
</dbReference>
<dbReference type="GO" id="GO:0006730">
    <property type="term" value="P:one-carbon metabolic process"/>
    <property type="evidence" value="ECO:0007669"/>
    <property type="project" value="UniProtKB-UniRule"/>
</dbReference>
<dbReference type="HAMAP" id="MF_01093">
    <property type="entry name" value="MtrA"/>
    <property type="match status" value="1"/>
</dbReference>
<dbReference type="InterPro" id="IPR030688">
    <property type="entry name" value="MeTrfase_MtrA/MtxA"/>
</dbReference>
<dbReference type="InterPro" id="IPR005778">
    <property type="entry name" value="MtrA"/>
</dbReference>
<dbReference type="NCBIfam" id="TIGR01111">
    <property type="entry name" value="mtrA"/>
    <property type="match status" value="1"/>
</dbReference>
<dbReference type="NCBIfam" id="NF002126">
    <property type="entry name" value="PRK00964.1-4"/>
    <property type="match status" value="1"/>
</dbReference>
<dbReference type="Pfam" id="PF04208">
    <property type="entry name" value="MtrA"/>
    <property type="match status" value="1"/>
</dbReference>
<dbReference type="PIRSF" id="PIRSF500207">
    <property type="entry name" value="MtrA"/>
    <property type="match status" value="1"/>
</dbReference>
<dbReference type="PIRSF" id="PIRSF009452">
    <property type="entry name" value="MtrA_MtxA"/>
    <property type="match status" value="1"/>
</dbReference>
<keyword id="KW-1003">Cell membrane</keyword>
<keyword id="KW-0170">Cobalt</keyword>
<keyword id="KW-0472">Membrane</keyword>
<keyword id="KW-0484">Methanogenesis</keyword>
<keyword id="KW-0489">Methyltransferase</keyword>
<keyword id="KW-0554">One-carbon metabolism</keyword>
<keyword id="KW-0808">Transferase</keyword>
<keyword id="KW-1278">Translocase</keyword>
<keyword id="KW-0812">Transmembrane</keyword>
<keyword id="KW-1133">Transmembrane helix</keyword>
<gene>
    <name evidence="1" type="primary">mtrA1</name>
    <name type="ordered locus">mru_1919</name>
</gene>